<name>LDHD_STAAN</name>
<proteinExistence type="evidence at protein level"/>
<evidence type="ECO:0000250" key="1">
    <source>
        <dbReference type="UniProtKB" id="P26297"/>
    </source>
</evidence>
<evidence type="ECO:0000250" key="2">
    <source>
        <dbReference type="UniProtKB" id="P30901"/>
    </source>
</evidence>
<evidence type="ECO:0000305" key="3"/>
<accession>P99116</accession>
<accession>Q99RB1</accession>
<comment type="catalytic activity">
    <reaction>
        <text>(R)-lactate + NAD(+) = pyruvate + NADH + H(+)</text>
        <dbReference type="Rhea" id="RHEA:16369"/>
        <dbReference type="ChEBI" id="CHEBI:15361"/>
        <dbReference type="ChEBI" id="CHEBI:15378"/>
        <dbReference type="ChEBI" id="CHEBI:16004"/>
        <dbReference type="ChEBI" id="CHEBI:57540"/>
        <dbReference type="ChEBI" id="CHEBI:57945"/>
        <dbReference type="EC" id="1.1.1.28"/>
    </reaction>
</comment>
<comment type="similarity">
    <text evidence="3">Belongs to the D-isomer specific 2-hydroxyacid dehydrogenase family.</text>
</comment>
<comment type="sequence caution" evidence="3">
    <conflict type="erroneous initiation">
        <sequence resource="EMBL-CDS" id="BAB43615"/>
    </conflict>
</comment>
<reference key="1">
    <citation type="journal article" date="2001" name="Lancet">
        <title>Whole genome sequencing of meticillin-resistant Staphylococcus aureus.</title>
        <authorList>
            <person name="Kuroda M."/>
            <person name="Ohta T."/>
            <person name="Uchiyama I."/>
            <person name="Baba T."/>
            <person name="Yuzawa H."/>
            <person name="Kobayashi I."/>
            <person name="Cui L."/>
            <person name="Oguchi A."/>
            <person name="Aoki K."/>
            <person name="Nagai Y."/>
            <person name="Lian J.-Q."/>
            <person name="Ito T."/>
            <person name="Kanamori M."/>
            <person name="Matsumaru H."/>
            <person name="Maruyama A."/>
            <person name="Murakami H."/>
            <person name="Hosoyama A."/>
            <person name="Mizutani-Ui Y."/>
            <person name="Takahashi N.K."/>
            <person name="Sawano T."/>
            <person name="Inoue R."/>
            <person name="Kaito C."/>
            <person name="Sekimizu K."/>
            <person name="Hirakawa H."/>
            <person name="Kuhara S."/>
            <person name="Goto S."/>
            <person name="Yabuzaki J."/>
            <person name="Kanehisa M."/>
            <person name="Yamashita A."/>
            <person name="Oshima K."/>
            <person name="Furuya K."/>
            <person name="Yoshino C."/>
            <person name="Shiba T."/>
            <person name="Hattori M."/>
            <person name="Ogasawara N."/>
            <person name="Hayashi H."/>
            <person name="Hiramatsu K."/>
        </authorList>
    </citation>
    <scope>NUCLEOTIDE SEQUENCE [LARGE SCALE GENOMIC DNA]</scope>
    <source>
        <strain>N315</strain>
    </source>
</reference>
<reference key="2">
    <citation type="journal article" date="2005" name="J. Microbiol. Methods">
        <title>Correlation of proteomic and transcriptomic profiles of Staphylococcus aureus during the post-exponential phase of growth.</title>
        <authorList>
            <person name="Scherl A."/>
            <person name="Francois P."/>
            <person name="Bento M."/>
            <person name="Deshusses J.M."/>
            <person name="Charbonnier Y."/>
            <person name="Converset V."/>
            <person name="Huyghe A."/>
            <person name="Walter N."/>
            <person name="Hoogland C."/>
            <person name="Appel R.D."/>
            <person name="Sanchez J.-C."/>
            <person name="Zimmermann-Ivol C.G."/>
            <person name="Corthals G.L."/>
            <person name="Hochstrasser D.F."/>
            <person name="Schrenzel J."/>
        </authorList>
    </citation>
    <scope>IDENTIFICATION BY MASS SPECTROMETRY</scope>
    <source>
        <strain>N315</strain>
    </source>
</reference>
<reference key="3">
    <citation type="submission" date="2007-10" db="UniProtKB">
        <title>Shotgun proteomic analysis of total and membrane protein extracts of S. aureus strain N315.</title>
        <authorList>
            <person name="Vaezzadeh A.R."/>
            <person name="Deshusses J."/>
            <person name="Lescuyer P."/>
            <person name="Hochstrasser D.F."/>
        </authorList>
    </citation>
    <scope>IDENTIFICATION BY MASS SPECTROMETRY [LARGE SCALE ANALYSIS]</scope>
    <source>
        <strain>N315</strain>
    </source>
</reference>
<dbReference type="EC" id="1.1.1.28"/>
<dbReference type="EMBL" id="BA000018">
    <property type="protein sequence ID" value="BAB43615.1"/>
    <property type="status" value="ALT_INIT"/>
    <property type="molecule type" value="Genomic_DNA"/>
</dbReference>
<dbReference type="PIR" id="E90056">
    <property type="entry name" value="E90056"/>
</dbReference>
<dbReference type="RefSeq" id="WP_000161545.1">
    <property type="nucleotide sequence ID" value="NC_002745.2"/>
</dbReference>
<dbReference type="SMR" id="P99116"/>
<dbReference type="EnsemblBacteria" id="BAB43615">
    <property type="protein sequence ID" value="BAB43615"/>
    <property type="gene ID" value="BAB43615"/>
</dbReference>
<dbReference type="KEGG" id="sau:SA2312"/>
<dbReference type="HOGENOM" id="CLU_019796_1_1_9"/>
<dbReference type="GO" id="GO:0008720">
    <property type="term" value="F:D-lactate dehydrogenase activity"/>
    <property type="evidence" value="ECO:0007669"/>
    <property type="project" value="UniProtKB-EC"/>
</dbReference>
<dbReference type="GO" id="GO:0051287">
    <property type="term" value="F:NAD binding"/>
    <property type="evidence" value="ECO:0007669"/>
    <property type="project" value="InterPro"/>
</dbReference>
<dbReference type="CDD" id="cd12186">
    <property type="entry name" value="LDH"/>
    <property type="match status" value="1"/>
</dbReference>
<dbReference type="Gene3D" id="3.40.50.720">
    <property type="entry name" value="NAD(P)-binding Rossmann-like Domain"/>
    <property type="match status" value="2"/>
</dbReference>
<dbReference type="InterPro" id="IPR006139">
    <property type="entry name" value="D-isomer_2_OHA_DH_cat_dom"/>
</dbReference>
<dbReference type="InterPro" id="IPR029753">
    <property type="entry name" value="D-isomer_DH_CS"/>
</dbReference>
<dbReference type="InterPro" id="IPR029752">
    <property type="entry name" value="D-isomer_DH_CS1"/>
</dbReference>
<dbReference type="InterPro" id="IPR006140">
    <property type="entry name" value="D-isomer_DH_NAD-bd"/>
</dbReference>
<dbReference type="InterPro" id="IPR036291">
    <property type="entry name" value="NAD(P)-bd_dom_sf"/>
</dbReference>
<dbReference type="NCBIfam" id="NF006374">
    <property type="entry name" value="PRK08605.1"/>
    <property type="match status" value="1"/>
</dbReference>
<dbReference type="NCBIfam" id="NF009127">
    <property type="entry name" value="PRK12480.1"/>
    <property type="match status" value="1"/>
</dbReference>
<dbReference type="PANTHER" id="PTHR43026">
    <property type="entry name" value="2-HYDROXYACID DEHYDROGENASE HOMOLOG 1-RELATED"/>
    <property type="match status" value="1"/>
</dbReference>
<dbReference type="PANTHER" id="PTHR43026:SF1">
    <property type="entry name" value="2-HYDROXYACID DEHYDROGENASE HOMOLOG 1-RELATED"/>
    <property type="match status" value="1"/>
</dbReference>
<dbReference type="Pfam" id="PF00389">
    <property type="entry name" value="2-Hacid_dh"/>
    <property type="match status" value="1"/>
</dbReference>
<dbReference type="Pfam" id="PF02826">
    <property type="entry name" value="2-Hacid_dh_C"/>
    <property type="match status" value="1"/>
</dbReference>
<dbReference type="SUPFAM" id="SSF52283">
    <property type="entry name" value="Formate/glycerate dehydrogenase catalytic domain-like"/>
    <property type="match status" value="1"/>
</dbReference>
<dbReference type="SUPFAM" id="SSF51735">
    <property type="entry name" value="NAD(P)-binding Rossmann-fold domains"/>
    <property type="match status" value="1"/>
</dbReference>
<dbReference type="PROSITE" id="PS00065">
    <property type="entry name" value="D_2_HYDROXYACID_DH_1"/>
    <property type="match status" value="1"/>
</dbReference>
<dbReference type="PROSITE" id="PS00670">
    <property type="entry name" value="D_2_HYDROXYACID_DH_2"/>
    <property type="match status" value="1"/>
</dbReference>
<dbReference type="PROSITE" id="PS00671">
    <property type="entry name" value="D_2_HYDROXYACID_DH_3"/>
    <property type="match status" value="1"/>
</dbReference>
<keyword id="KW-0520">NAD</keyword>
<keyword id="KW-0560">Oxidoreductase</keyword>
<gene>
    <name type="primary">ldhD</name>
    <name type="synonym">ddh</name>
    <name type="ordered locus">SA2312</name>
</gene>
<protein>
    <recommendedName>
        <fullName>D-lactate dehydrogenase</fullName>
        <shortName>D-LDH</shortName>
        <ecNumber>1.1.1.28</ecNumber>
    </recommendedName>
    <alternativeName>
        <fullName>D-specific 2-hydroxyacid dehydrogenase</fullName>
    </alternativeName>
</protein>
<organism>
    <name type="scientific">Staphylococcus aureus (strain N315)</name>
    <dbReference type="NCBI Taxonomy" id="158879"/>
    <lineage>
        <taxon>Bacteria</taxon>
        <taxon>Bacillati</taxon>
        <taxon>Bacillota</taxon>
        <taxon>Bacilli</taxon>
        <taxon>Bacillales</taxon>
        <taxon>Staphylococcaceae</taxon>
        <taxon>Staphylococcus</taxon>
    </lineage>
</organism>
<sequence>MTKIMFFGTRDYEKEMALNWGKKNNVEVTTSKELLSSATVDQLKDYDGVTTMQFGKLENDVYPKLESYGIKQIAQRTAGFDMYDLDLAKKHNIVISNVPSYSPETIAEYSVSIALQLVRRFPDIERRVQTHDFTWQAEIMSKPVKNMTVAIIGTGRIGAATAKIYAGFGATITAYDAYPNKDLDFLTYKDSVKEAIKDADIISLHVPANKESYHLFDKAMFDHVKKGAILVNAARGAVINTPDLIAAVNDGTLLGAAIDTYENEAAYFTNDWTNKDIDDKTLLELIEHERILVTPHIAFFSDEAVQNLVEGGLNAALSVINTGTCETRLN</sequence>
<feature type="chain" id="PRO_0000075961" description="D-lactate dehydrogenase">
    <location>
        <begin position="1"/>
        <end position="330"/>
    </location>
</feature>
<feature type="active site" evidence="1">
    <location>
        <position position="235"/>
    </location>
</feature>
<feature type="active site" evidence="1">
    <location>
        <position position="264"/>
    </location>
</feature>
<feature type="active site" description="Proton donor" evidence="1">
    <location>
        <position position="296"/>
    </location>
</feature>
<feature type="binding site" evidence="2">
    <location>
        <begin position="156"/>
        <end position="157"/>
    </location>
    <ligand>
        <name>NAD(+)</name>
        <dbReference type="ChEBI" id="CHEBI:57540"/>
    </ligand>
</feature>
<feature type="binding site" evidence="1">
    <location>
        <position position="176"/>
    </location>
    <ligand>
        <name>NAD(+)</name>
        <dbReference type="ChEBI" id="CHEBI:57540"/>
    </ligand>
</feature>
<feature type="binding site" evidence="2">
    <location>
        <begin position="206"/>
        <end position="207"/>
    </location>
    <ligand>
        <name>NAD(+)</name>
        <dbReference type="ChEBI" id="CHEBI:57540"/>
    </ligand>
</feature>
<feature type="binding site" evidence="2">
    <location>
        <begin position="233"/>
        <end position="235"/>
    </location>
    <ligand>
        <name>NAD(+)</name>
        <dbReference type="ChEBI" id="CHEBI:57540"/>
    </ligand>
</feature>
<feature type="binding site" evidence="2">
    <location>
        <position position="259"/>
    </location>
    <ligand>
        <name>NAD(+)</name>
        <dbReference type="ChEBI" id="CHEBI:57540"/>
    </ligand>
</feature>